<feature type="chain" id="PRO_1000136291" description="UPF0231 protein YacL">
    <location>
        <begin position="1"/>
        <end position="120"/>
    </location>
</feature>
<comment type="similarity">
    <text evidence="1">Belongs to the UPF0231 family.</text>
</comment>
<gene>
    <name evidence="1" type="primary">yacL</name>
    <name type="ordered locus">ECIAI39_0119</name>
</gene>
<organism>
    <name type="scientific">Escherichia coli O7:K1 (strain IAI39 / ExPEC)</name>
    <dbReference type="NCBI Taxonomy" id="585057"/>
    <lineage>
        <taxon>Bacteria</taxon>
        <taxon>Pseudomonadati</taxon>
        <taxon>Pseudomonadota</taxon>
        <taxon>Gammaproteobacteria</taxon>
        <taxon>Enterobacterales</taxon>
        <taxon>Enterobacteriaceae</taxon>
        <taxon>Escherichia</taxon>
    </lineage>
</organism>
<proteinExistence type="inferred from homology"/>
<protein>
    <recommendedName>
        <fullName evidence="1">UPF0231 protein YacL</fullName>
    </recommendedName>
</protein>
<accession>B7NI79</accession>
<name>YACL_ECO7I</name>
<evidence type="ECO:0000255" key="1">
    <source>
        <dbReference type="HAMAP-Rule" id="MF_01053"/>
    </source>
</evidence>
<reference key="1">
    <citation type="journal article" date="2009" name="PLoS Genet.">
        <title>Organised genome dynamics in the Escherichia coli species results in highly diverse adaptive paths.</title>
        <authorList>
            <person name="Touchon M."/>
            <person name="Hoede C."/>
            <person name="Tenaillon O."/>
            <person name="Barbe V."/>
            <person name="Baeriswyl S."/>
            <person name="Bidet P."/>
            <person name="Bingen E."/>
            <person name="Bonacorsi S."/>
            <person name="Bouchier C."/>
            <person name="Bouvet O."/>
            <person name="Calteau A."/>
            <person name="Chiapello H."/>
            <person name="Clermont O."/>
            <person name="Cruveiller S."/>
            <person name="Danchin A."/>
            <person name="Diard M."/>
            <person name="Dossat C."/>
            <person name="Karoui M.E."/>
            <person name="Frapy E."/>
            <person name="Garry L."/>
            <person name="Ghigo J.M."/>
            <person name="Gilles A.M."/>
            <person name="Johnson J."/>
            <person name="Le Bouguenec C."/>
            <person name="Lescat M."/>
            <person name="Mangenot S."/>
            <person name="Martinez-Jehanne V."/>
            <person name="Matic I."/>
            <person name="Nassif X."/>
            <person name="Oztas S."/>
            <person name="Petit M.A."/>
            <person name="Pichon C."/>
            <person name="Rouy Z."/>
            <person name="Ruf C.S."/>
            <person name="Schneider D."/>
            <person name="Tourret J."/>
            <person name="Vacherie B."/>
            <person name="Vallenet D."/>
            <person name="Medigue C."/>
            <person name="Rocha E.P.C."/>
            <person name="Denamur E."/>
        </authorList>
    </citation>
    <scope>NUCLEOTIDE SEQUENCE [LARGE SCALE GENOMIC DNA]</scope>
    <source>
        <strain>IAI39 / ExPEC</strain>
    </source>
</reference>
<sequence>MDYEFLRDITGVVKVRMSMGHEVVGHWFNEEVKENLALLDEVEQAAHALKGSERSWQRAGHEYTLWMDGEEVMVRANQLEFAGDEMEEGMNYYDEESLSLCGVEDFLQVVAAYRNFVQQK</sequence>
<dbReference type="EMBL" id="CU928164">
    <property type="protein sequence ID" value="CAR16260.1"/>
    <property type="molecule type" value="Genomic_DNA"/>
</dbReference>
<dbReference type="RefSeq" id="WP_000384306.1">
    <property type="nucleotide sequence ID" value="NC_011750.1"/>
</dbReference>
<dbReference type="RefSeq" id="YP_002406168.1">
    <property type="nucleotide sequence ID" value="NC_011750.1"/>
</dbReference>
<dbReference type="STRING" id="585057.ECIAI39_0119"/>
<dbReference type="GeneID" id="93777317"/>
<dbReference type="KEGG" id="ect:ECIAI39_0119"/>
<dbReference type="PATRIC" id="fig|585057.6.peg.129"/>
<dbReference type="HOGENOM" id="CLU_139226_0_0_6"/>
<dbReference type="Proteomes" id="UP000000749">
    <property type="component" value="Chromosome"/>
</dbReference>
<dbReference type="HAMAP" id="MF_01053">
    <property type="entry name" value="UPF0231"/>
    <property type="match status" value="1"/>
</dbReference>
<dbReference type="InterPro" id="IPR008249">
    <property type="entry name" value="UPF0231"/>
</dbReference>
<dbReference type="NCBIfam" id="NF003574">
    <property type="entry name" value="PRK05248.1-1"/>
    <property type="match status" value="1"/>
</dbReference>
<dbReference type="NCBIfam" id="NF003576">
    <property type="entry name" value="PRK05248.1-3"/>
    <property type="match status" value="1"/>
</dbReference>
<dbReference type="Pfam" id="PF06062">
    <property type="entry name" value="UPF0231"/>
    <property type="match status" value="1"/>
</dbReference>
<dbReference type="PIRSF" id="PIRSF006287">
    <property type="entry name" value="UCP006287"/>
    <property type="match status" value="1"/>
</dbReference>